<keyword id="KW-0378">Hydrolase</keyword>
<keyword id="KW-0904">Protein phosphatase</keyword>
<keyword id="KW-1185">Reference proteome</keyword>
<name>VF355_IIV6</name>
<organism>
    <name type="scientific">Invertebrate iridescent virus 6</name>
    <name type="common">IIV-6</name>
    <name type="synonym">Chilo iridescent virus</name>
    <dbReference type="NCBI Taxonomy" id="176652"/>
    <lineage>
        <taxon>Viruses</taxon>
        <taxon>Varidnaviria</taxon>
        <taxon>Bamfordvirae</taxon>
        <taxon>Nucleocytoviricota</taxon>
        <taxon>Megaviricetes</taxon>
        <taxon>Pimascovirales</taxon>
        <taxon>Iridoviridae</taxon>
        <taxon>Betairidovirinae</taxon>
        <taxon>Iridovirus</taxon>
    </lineage>
</organism>
<protein>
    <recommendedName>
        <fullName>Putative CTD phosphatase-like protein 355R</fullName>
        <ecNumber>3.1.3.-</ecNumber>
    </recommendedName>
</protein>
<comment type="function">
    <text evidence="2">May function as a phosphatase.</text>
</comment>
<comment type="similarity">
    <text evidence="2">Belongs to the IIV-6 355R family.</text>
</comment>
<dbReference type="EC" id="3.1.3.-"/>
<dbReference type="EMBL" id="AF303741">
    <property type="protein sequence ID" value="AAK82216.1"/>
    <property type="molecule type" value="Genomic_DNA"/>
</dbReference>
<dbReference type="RefSeq" id="NP_149818.1">
    <property type="nucleotide sequence ID" value="NC_003038.1"/>
</dbReference>
<dbReference type="SMR" id="Q91FG9"/>
<dbReference type="KEGG" id="vg:1733203"/>
<dbReference type="OrthoDB" id="18352at10239"/>
<dbReference type="Proteomes" id="UP000001359">
    <property type="component" value="Genome"/>
</dbReference>
<dbReference type="GO" id="GO:0004721">
    <property type="term" value="F:phosphoprotein phosphatase activity"/>
    <property type="evidence" value="ECO:0007669"/>
    <property type="project" value="UniProtKB-KW"/>
</dbReference>
<dbReference type="Gene3D" id="3.40.50.1000">
    <property type="entry name" value="HAD superfamily/HAD-like"/>
    <property type="match status" value="1"/>
</dbReference>
<dbReference type="InterPro" id="IPR004274">
    <property type="entry name" value="FCP1_dom"/>
</dbReference>
<dbReference type="InterPro" id="IPR036412">
    <property type="entry name" value="HAD-like_sf"/>
</dbReference>
<dbReference type="InterPro" id="IPR023214">
    <property type="entry name" value="HAD_sf"/>
</dbReference>
<dbReference type="InterPro" id="IPR050365">
    <property type="entry name" value="TIM50"/>
</dbReference>
<dbReference type="PANTHER" id="PTHR12210">
    <property type="entry name" value="DULLARD PROTEIN PHOSPHATASE"/>
    <property type="match status" value="1"/>
</dbReference>
<dbReference type="Pfam" id="PF03031">
    <property type="entry name" value="NIF"/>
    <property type="match status" value="1"/>
</dbReference>
<dbReference type="SMART" id="SM00577">
    <property type="entry name" value="CPDc"/>
    <property type="match status" value="1"/>
</dbReference>
<dbReference type="SUPFAM" id="SSF56784">
    <property type="entry name" value="HAD-like"/>
    <property type="match status" value="1"/>
</dbReference>
<dbReference type="PROSITE" id="PS50969">
    <property type="entry name" value="FCP1"/>
    <property type="match status" value="1"/>
</dbReference>
<gene>
    <name type="ORF">IIV6-355R</name>
</gene>
<organismHost>
    <name type="scientific">Acheta domesticus</name>
    <name type="common">House cricket</name>
    <dbReference type="NCBI Taxonomy" id="6997"/>
</organismHost>
<organismHost>
    <name type="scientific">Chilo suppressalis</name>
    <name type="common">Asiatic rice borer moth</name>
    <dbReference type="NCBI Taxonomy" id="168631"/>
</organismHost>
<organismHost>
    <name type="scientific">Gryllus bimaculatus</name>
    <name type="common">Two-spotted cricket</name>
    <dbReference type="NCBI Taxonomy" id="6999"/>
</organismHost>
<organismHost>
    <name type="scientific">Gryllus campestris</name>
    <dbReference type="NCBI Taxonomy" id="58607"/>
</organismHost>
<organismHost>
    <name type="scientific">Spodoptera frugiperda</name>
    <name type="common">Fall armyworm</name>
    <dbReference type="NCBI Taxonomy" id="7108"/>
</organismHost>
<feature type="chain" id="PRO_0000376905" description="Putative CTD phosphatase-like protein 355R">
    <location>
        <begin position="1"/>
        <end position="182"/>
    </location>
</feature>
<feature type="domain" description="FCP1 homology" evidence="1">
    <location>
        <begin position="1"/>
        <end position="180"/>
    </location>
</feature>
<reference key="1">
    <citation type="journal article" date="2001" name="Virology">
        <title>Analysis of the first complete DNA sequence of an invertebrate iridovirus: coding strategy of the genome of Chilo iridescent virus.</title>
        <authorList>
            <person name="Jakob N.J."/>
            <person name="Mueller K."/>
            <person name="Bahr U."/>
            <person name="Darai G."/>
        </authorList>
    </citation>
    <scope>NUCLEOTIDE SEQUENCE [LARGE SCALE GENOMIC DNA]</scope>
</reference>
<reference key="2">
    <citation type="journal article" date="2007" name="Virol. J.">
        <title>Comparative genomic analysis of the family Iridoviridae: re-annotating and defining the core set of iridovirus genes.</title>
        <authorList>
            <person name="Eaton H.E."/>
            <person name="Metcalf J."/>
            <person name="Penny E."/>
            <person name="Tcherepanov V."/>
            <person name="Upton C."/>
            <person name="Brunetti C.R."/>
        </authorList>
    </citation>
    <scope>GENOME REANNOTATION</scope>
</reference>
<evidence type="ECO:0000255" key="1">
    <source>
        <dbReference type="PROSITE-ProRule" id="PRU00336"/>
    </source>
</evidence>
<evidence type="ECO:0000305" key="2"/>
<proteinExistence type="inferred from homology"/>
<accession>Q91FG9</accession>
<sequence length="182" mass="22021">MKNIFLDLDNTLICAEPFEDITDLGRFKERASHFDFKNMEDYYLICGRPYLQPFLDYLFKNFNVHIWTAASKGYASFIIEEFILKKDPSRKINLVLFDHHCRVSKRVYKKEKASKKLEMLWTIWKLQEFDKENTFIIDDLEEVKESQVKNCFSVKPFFFMENDSEYDQELMRLKDVLNRHLN</sequence>